<evidence type="ECO:0000255" key="1">
    <source>
        <dbReference type="HAMAP-Rule" id="MF_00116"/>
    </source>
</evidence>
<gene>
    <name evidence="1" type="primary">dut</name>
    <name type="ordered locus">Swol_0911</name>
</gene>
<proteinExistence type="inferred from homology"/>
<protein>
    <recommendedName>
        <fullName evidence="1">Deoxyuridine 5'-triphosphate nucleotidohydrolase</fullName>
        <shortName evidence="1">dUTPase</shortName>
        <ecNumber evidence="1">3.6.1.23</ecNumber>
    </recommendedName>
    <alternativeName>
        <fullName evidence="1">dUTP pyrophosphatase</fullName>
    </alternativeName>
</protein>
<organism>
    <name type="scientific">Syntrophomonas wolfei subsp. wolfei (strain DSM 2245B / Goettingen)</name>
    <dbReference type="NCBI Taxonomy" id="335541"/>
    <lineage>
        <taxon>Bacteria</taxon>
        <taxon>Bacillati</taxon>
        <taxon>Bacillota</taxon>
        <taxon>Clostridia</taxon>
        <taxon>Eubacteriales</taxon>
        <taxon>Syntrophomonadaceae</taxon>
        <taxon>Syntrophomonas</taxon>
    </lineage>
</organism>
<sequence>MKVLFNRLHSHDLPLPRYMTPGSSGLDLYAAVDEEILIPSGKIVLVPTGLALAIPEGYEAQIRPRSGLALKYGITLLNTPGTIDADYRGEIKVIVINLGDKDYILKRGERIAQMVFSRVEKAEFMEVKSLDETLRGAGGFGHTGI</sequence>
<reference key="1">
    <citation type="journal article" date="2010" name="Environ. Microbiol.">
        <title>The genome of Syntrophomonas wolfei: new insights into syntrophic metabolism and biohydrogen production.</title>
        <authorList>
            <person name="Sieber J.R."/>
            <person name="Sims D.R."/>
            <person name="Han C."/>
            <person name="Kim E."/>
            <person name="Lykidis A."/>
            <person name="Lapidus A.L."/>
            <person name="McDonnald E."/>
            <person name="Rohlin L."/>
            <person name="Culley D.E."/>
            <person name="Gunsalus R."/>
            <person name="McInerney M.J."/>
        </authorList>
    </citation>
    <scope>NUCLEOTIDE SEQUENCE [LARGE SCALE GENOMIC DNA]</scope>
    <source>
        <strain>DSM 2245B / Goettingen</strain>
    </source>
</reference>
<feature type="chain" id="PRO_1000076075" description="Deoxyuridine 5'-triphosphate nucleotidohydrolase">
    <location>
        <begin position="1"/>
        <end position="145"/>
    </location>
</feature>
<feature type="binding site" evidence="1">
    <location>
        <begin position="65"/>
        <end position="67"/>
    </location>
    <ligand>
        <name>substrate</name>
    </ligand>
</feature>
<feature type="binding site" evidence="1">
    <location>
        <position position="78"/>
    </location>
    <ligand>
        <name>substrate</name>
    </ligand>
</feature>
<feature type="binding site" evidence="1">
    <location>
        <begin position="82"/>
        <end position="84"/>
    </location>
    <ligand>
        <name>substrate</name>
    </ligand>
</feature>
<feature type="binding site" evidence="1">
    <location>
        <position position="92"/>
    </location>
    <ligand>
        <name>substrate</name>
    </ligand>
</feature>
<name>DUT_SYNWW</name>
<keyword id="KW-0378">Hydrolase</keyword>
<keyword id="KW-0460">Magnesium</keyword>
<keyword id="KW-0479">Metal-binding</keyword>
<keyword id="KW-0546">Nucleotide metabolism</keyword>
<keyword id="KW-1185">Reference proteome</keyword>
<accession>Q0AYH7</accession>
<dbReference type="EC" id="3.6.1.23" evidence="1"/>
<dbReference type="EMBL" id="CP000448">
    <property type="protein sequence ID" value="ABI68227.1"/>
    <property type="molecule type" value="Genomic_DNA"/>
</dbReference>
<dbReference type="RefSeq" id="WP_011640332.1">
    <property type="nucleotide sequence ID" value="NC_008346.1"/>
</dbReference>
<dbReference type="SMR" id="Q0AYH7"/>
<dbReference type="STRING" id="335541.Swol_0911"/>
<dbReference type="KEGG" id="swo:Swol_0911"/>
<dbReference type="eggNOG" id="COG0756">
    <property type="taxonomic scope" value="Bacteria"/>
</dbReference>
<dbReference type="HOGENOM" id="CLU_068508_1_2_9"/>
<dbReference type="OrthoDB" id="9809956at2"/>
<dbReference type="UniPathway" id="UPA00610">
    <property type="reaction ID" value="UER00666"/>
</dbReference>
<dbReference type="Proteomes" id="UP000001968">
    <property type="component" value="Chromosome"/>
</dbReference>
<dbReference type="GO" id="GO:0004170">
    <property type="term" value="F:dUTP diphosphatase activity"/>
    <property type="evidence" value="ECO:0007669"/>
    <property type="project" value="UniProtKB-UniRule"/>
</dbReference>
<dbReference type="GO" id="GO:0000287">
    <property type="term" value="F:magnesium ion binding"/>
    <property type="evidence" value="ECO:0007669"/>
    <property type="project" value="UniProtKB-UniRule"/>
</dbReference>
<dbReference type="GO" id="GO:0006226">
    <property type="term" value="P:dUMP biosynthetic process"/>
    <property type="evidence" value="ECO:0007669"/>
    <property type="project" value="UniProtKB-UniRule"/>
</dbReference>
<dbReference type="GO" id="GO:0046081">
    <property type="term" value="P:dUTP catabolic process"/>
    <property type="evidence" value="ECO:0007669"/>
    <property type="project" value="InterPro"/>
</dbReference>
<dbReference type="CDD" id="cd07557">
    <property type="entry name" value="trimeric_dUTPase"/>
    <property type="match status" value="1"/>
</dbReference>
<dbReference type="FunFam" id="2.70.40.10:FF:000002">
    <property type="entry name" value="dUTP diphosphatase"/>
    <property type="match status" value="1"/>
</dbReference>
<dbReference type="Gene3D" id="2.70.40.10">
    <property type="match status" value="1"/>
</dbReference>
<dbReference type="HAMAP" id="MF_00116">
    <property type="entry name" value="dUTPase_bact"/>
    <property type="match status" value="1"/>
</dbReference>
<dbReference type="InterPro" id="IPR008181">
    <property type="entry name" value="dUTPase"/>
</dbReference>
<dbReference type="InterPro" id="IPR029054">
    <property type="entry name" value="dUTPase-like"/>
</dbReference>
<dbReference type="InterPro" id="IPR036157">
    <property type="entry name" value="dUTPase-like_sf"/>
</dbReference>
<dbReference type="InterPro" id="IPR033704">
    <property type="entry name" value="dUTPase_trimeric"/>
</dbReference>
<dbReference type="NCBIfam" id="TIGR00576">
    <property type="entry name" value="dut"/>
    <property type="match status" value="1"/>
</dbReference>
<dbReference type="NCBIfam" id="NF001862">
    <property type="entry name" value="PRK00601.1"/>
    <property type="match status" value="1"/>
</dbReference>
<dbReference type="PANTHER" id="PTHR11241">
    <property type="entry name" value="DEOXYURIDINE 5'-TRIPHOSPHATE NUCLEOTIDOHYDROLASE"/>
    <property type="match status" value="1"/>
</dbReference>
<dbReference type="PANTHER" id="PTHR11241:SF0">
    <property type="entry name" value="DEOXYURIDINE 5'-TRIPHOSPHATE NUCLEOTIDOHYDROLASE"/>
    <property type="match status" value="1"/>
</dbReference>
<dbReference type="Pfam" id="PF00692">
    <property type="entry name" value="dUTPase"/>
    <property type="match status" value="1"/>
</dbReference>
<dbReference type="SUPFAM" id="SSF51283">
    <property type="entry name" value="dUTPase-like"/>
    <property type="match status" value="1"/>
</dbReference>
<comment type="function">
    <text evidence="1">This enzyme is involved in nucleotide metabolism: it produces dUMP, the immediate precursor of thymidine nucleotides and it decreases the intracellular concentration of dUTP so that uracil cannot be incorporated into DNA.</text>
</comment>
<comment type="catalytic activity">
    <reaction evidence="1">
        <text>dUTP + H2O = dUMP + diphosphate + H(+)</text>
        <dbReference type="Rhea" id="RHEA:10248"/>
        <dbReference type="ChEBI" id="CHEBI:15377"/>
        <dbReference type="ChEBI" id="CHEBI:15378"/>
        <dbReference type="ChEBI" id="CHEBI:33019"/>
        <dbReference type="ChEBI" id="CHEBI:61555"/>
        <dbReference type="ChEBI" id="CHEBI:246422"/>
        <dbReference type="EC" id="3.6.1.23"/>
    </reaction>
</comment>
<comment type="cofactor">
    <cofactor evidence="1">
        <name>Mg(2+)</name>
        <dbReference type="ChEBI" id="CHEBI:18420"/>
    </cofactor>
</comment>
<comment type="pathway">
    <text evidence="1">Pyrimidine metabolism; dUMP biosynthesis; dUMP from dCTP (dUTP route): step 2/2.</text>
</comment>
<comment type="similarity">
    <text evidence="1">Belongs to the dUTPase family.</text>
</comment>